<evidence type="ECO:0000255" key="1">
    <source>
        <dbReference type="HAMAP-Rule" id="MF_00323"/>
    </source>
</evidence>
<organism>
    <name type="scientific">Brucella abortus (strain S19)</name>
    <dbReference type="NCBI Taxonomy" id="430066"/>
    <lineage>
        <taxon>Bacteria</taxon>
        <taxon>Pseudomonadati</taxon>
        <taxon>Pseudomonadota</taxon>
        <taxon>Alphaproteobacteria</taxon>
        <taxon>Hyphomicrobiales</taxon>
        <taxon>Brucellaceae</taxon>
        <taxon>Brucella/Ochrobactrum group</taxon>
        <taxon>Brucella</taxon>
    </lineage>
</organism>
<gene>
    <name evidence="1" type="primary">hemH</name>
    <name type="ordered locus">BAbS19_II00700</name>
</gene>
<protein>
    <recommendedName>
        <fullName evidence="1">Ferrochelatase</fullName>
        <ecNumber evidence="1">4.98.1.1</ecNumber>
    </recommendedName>
    <alternativeName>
        <fullName evidence="1">Heme synthase</fullName>
    </alternativeName>
    <alternativeName>
        <fullName evidence="1">Protoheme ferro-lyase</fullName>
    </alternativeName>
</protein>
<comment type="function">
    <text evidence="1">Catalyzes the ferrous insertion into protoporphyrin IX.</text>
</comment>
<comment type="catalytic activity">
    <reaction evidence="1">
        <text>heme b + 2 H(+) = protoporphyrin IX + Fe(2+)</text>
        <dbReference type="Rhea" id="RHEA:22584"/>
        <dbReference type="ChEBI" id="CHEBI:15378"/>
        <dbReference type="ChEBI" id="CHEBI:29033"/>
        <dbReference type="ChEBI" id="CHEBI:57306"/>
        <dbReference type="ChEBI" id="CHEBI:60344"/>
        <dbReference type="EC" id="4.98.1.1"/>
    </reaction>
</comment>
<comment type="pathway">
    <text evidence="1">Porphyrin-containing compound metabolism; protoheme biosynthesis; protoheme from protoporphyrin-IX: step 1/1.</text>
</comment>
<comment type="subcellular location">
    <subcellularLocation>
        <location evidence="1">Cytoplasm</location>
    </subcellularLocation>
</comment>
<comment type="similarity">
    <text evidence="1">Belongs to the ferrochelatase family.</text>
</comment>
<reference key="1">
    <citation type="journal article" date="2008" name="PLoS ONE">
        <title>Genome sequence of Brucella abortus vaccine strain S19 compared to virulent strains yields candidate virulence genes.</title>
        <authorList>
            <person name="Crasta O.R."/>
            <person name="Folkerts O."/>
            <person name="Fei Z."/>
            <person name="Mane S.P."/>
            <person name="Evans C."/>
            <person name="Martino-Catt S."/>
            <person name="Bricker B."/>
            <person name="Yu G."/>
            <person name="Du L."/>
            <person name="Sobral B.W."/>
        </authorList>
    </citation>
    <scope>NUCLEOTIDE SEQUENCE [LARGE SCALE GENOMIC DNA]</scope>
    <source>
        <strain>S19</strain>
    </source>
</reference>
<accession>B2SCP3</accession>
<feature type="chain" id="PRO_1000116031" description="Ferrochelatase">
    <location>
        <begin position="1"/>
        <end position="352"/>
    </location>
</feature>
<feature type="binding site" evidence="1">
    <location>
        <position position="222"/>
    </location>
    <ligand>
        <name>Fe cation</name>
        <dbReference type="ChEBI" id="CHEBI:24875"/>
    </ligand>
</feature>
<feature type="binding site" evidence="1">
    <location>
        <position position="303"/>
    </location>
    <ligand>
        <name>Fe cation</name>
        <dbReference type="ChEBI" id="CHEBI:24875"/>
    </ligand>
</feature>
<keyword id="KW-0963">Cytoplasm</keyword>
<keyword id="KW-0350">Heme biosynthesis</keyword>
<keyword id="KW-0408">Iron</keyword>
<keyword id="KW-0456">Lyase</keyword>
<keyword id="KW-0479">Metal-binding</keyword>
<keyword id="KW-0627">Porphyrin biosynthesis</keyword>
<sequence length="352" mass="40083">MSGTDKVRVNVSQTAQTPLHTSAKLPKVGVLLVNLGTPDGTSYGPMRRYLAEFLSDRRVIEWSRLIWYPILYGIVLNTRPRRSGRLYDRIWNHENNESPLRTYTRAQGEKLAKALSDQPNVVVDWAMRYGQPSIESITDRLLQQGCERIVIFPLYPQYSATTTATVNDKFFEALMKKRFMPAIRTVPSYEAEPVYIDALARSVEKHLATLSFKPEVILTSYHGIPKSYSDKGDPYRQQCLETTRLLRERLGLGEDEMRATFQSRFGPEEWLQPYTDETVKELAKNGVKLVAVLNPGFVADCLETVDEIGNEAAEEFLENGGENFSHIPCLNDSEEGMKVIETLVRRELLGWV</sequence>
<name>HEMH_BRUA1</name>
<dbReference type="EC" id="4.98.1.1" evidence="1"/>
<dbReference type="EMBL" id="CP000888">
    <property type="protein sequence ID" value="ACD73597.1"/>
    <property type="molecule type" value="Genomic_DNA"/>
</dbReference>
<dbReference type="RefSeq" id="WP_002966503.1">
    <property type="nucleotide sequence ID" value="NC_010740.1"/>
</dbReference>
<dbReference type="SMR" id="B2SCP3"/>
<dbReference type="GeneID" id="93015947"/>
<dbReference type="KEGG" id="bmc:BAbS19_II00700"/>
<dbReference type="HOGENOM" id="CLU_018884_0_0_5"/>
<dbReference type="UniPathway" id="UPA00252">
    <property type="reaction ID" value="UER00325"/>
</dbReference>
<dbReference type="Proteomes" id="UP000002565">
    <property type="component" value="Chromosome 2"/>
</dbReference>
<dbReference type="GO" id="GO:0005737">
    <property type="term" value="C:cytoplasm"/>
    <property type="evidence" value="ECO:0007669"/>
    <property type="project" value="UniProtKB-SubCell"/>
</dbReference>
<dbReference type="GO" id="GO:0004325">
    <property type="term" value="F:ferrochelatase activity"/>
    <property type="evidence" value="ECO:0007669"/>
    <property type="project" value="UniProtKB-UniRule"/>
</dbReference>
<dbReference type="GO" id="GO:0046872">
    <property type="term" value="F:metal ion binding"/>
    <property type="evidence" value="ECO:0007669"/>
    <property type="project" value="UniProtKB-KW"/>
</dbReference>
<dbReference type="GO" id="GO:0006783">
    <property type="term" value="P:heme biosynthetic process"/>
    <property type="evidence" value="ECO:0007669"/>
    <property type="project" value="UniProtKB-UniRule"/>
</dbReference>
<dbReference type="CDD" id="cd00419">
    <property type="entry name" value="Ferrochelatase_C"/>
    <property type="match status" value="1"/>
</dbReference>
<dbReference type="CDD" id="cd03411">
    <property type="entry name" value="Ferrochelatase_N"/>
    <property type="match status" value="1"/>
</dbReference>
<dbReference type="FunFam" id="3.40.50.1400:FF:000002">
    <property type="entry name" value="Ferrochelatase"/>
    <property type="match status" value="1"/>
</dbReference>
<dbReference type="Gene3D" id="3.40.50.1400">
    <property type="match status" value="2"/>
</dbReference>
<dbReference type="HAMAP" id="MF_00323">
    <property type="entry name" value="Ferrochelatase"/>
    <property type="match status" value="1"/>
</dbReference>
<dbReference type="InterPro" id="IPR001015">
    <property type="entry name" value="Ferrochelatase"/>
</dbReference>
<dbReference type="InterPro" id="IPR019772">
    <property type="entry name" value="Ferrochelatase_AS"/>
</dbReference>
<dbReference type="InterPro" id="IPR033644">
    <property type="entry name" value="Ferrochelatase_C"/>
</dbReference>
<dbReference type="InterPro" id="IPR033659">
    <property type="entry name" value="Ferrochelatase_N"/>
</dbReference>
<dbReference type="NCBIfam" id="TIGR00109">
    <property type="entry name" value="hemH"/>
    <property type="match status" value="1"/>
</dbReference>
<dbReference type="PANTHER" id="PTHR11108">
    <property type="entry name" value="FERROCHELATASE"/>
    <property type="match status" value="1"/>
</dbReference>
<dbReference type="PANTHER" id="PTHR11108:SF1">
    <property type="entry name" value="FERROCHELATASE, MITOCHONDRIAL"/>
    <property type="match status" value="1"/>
</dbReference>
<dbReference type="Pfam" id="PF00762">
    <property type="entry name" value="Ferrochelatase"/>
    <property type="match status" value="1"/>
</dbReference>
<dbReference type="SUPFAM" id="SSF53800">
    <property type="entry name" value="Chelatase"/>
    <property type="match status" value="1"/>
</dbReference>
<dbReference type="PROSITE" id="PS00534">
    <property type="entry name" value="FERROCHELATASE"/>
    <property type="match status" value="1"/>
</dbReference>
<proteinExistence type="inferred from homology"/>